<name>TXS4A_CUPSA</name>
<keyword id="KW-0027">Amidation</keyword>
<keyword id="KW-0903">Direct protein sequencing</keyword>
<keyword id="KW-0964">Secreted</keyword>
<keyword id="KW-0800">Toxin</keyword>
<protein>
    <recommendedName>
        <fullName evidence="3">Short cationic peptide-4a</fullName>
        <shortName evidence="3">SCP-4a</shortName>
    </recommendedName>
    <alternativeName>
        <fullName evidence="2">Short cationic peptide-4c</fullName>
        <shortName evidence="2">SCP-4c</shortName>
    </alternativeName>
    <alternativeName>
        <fullName evidence="3">Truncated variant of Cupiennin 4 family</fullName>
    </alternativeName>
</protein>
<evidence type="ECO:0000269" key="1">
    <source>
    </source>
</evidence>
<evidence type="ECO:0000303" key="2">
    <source>
    </source>
</evidence>
<evidence type="ECO:0000303" key="3">
    <source ref="2"/>
</evidence>
<evidence type="ECO:0000305" key="4"/>
<evidence type="ECO:0000305" key="5">
    <source>
    </source>
</evidence>
<proteinExistence type="evidence at protein level"/>
<feature type="peptide" id="PRO_0000421215" description="Short cationic peptide-4a" evidence="1">
    <location>
        <begin position="1"/>
        <end position="20"/>
    </location>
</feature>
<feature type="modified residue" description="Glutamic acid 1-amide" evidence="1">
    <location>
        <position position="20"/>
    </location>
</feature>
<comment type="subcellular location">
    <subcellularLocation>
        <location evidence="1">Secreted</location>
    </subcellularLocation>
</comment>
<comment type="tissue specificity">
    <text evidence="5">Expressed by the venom gland.</text>
</comment>
<comment type="mass spectrometry"/>
<comment type="similarity">
    <text evidence="4">Belongs to the cationic peptide 04 (cupiennin) family. 04 subfamily.</text>
</comment>
<accession>B3EWV8</accession>
<sequence>FLAKKVGKQLASHLAKKQLE</sequence>
<organism>
    <name type="scientific">Cupiennius salei</name>
    <name type="common">American wandering spider</name>
    <dbReference type="NCBI Taxonomy" id="6928"/>
    <lineage>
        <taxon>Eukaryota</taxon>
        <taxon>Metazoa</taxon>
        <taxon>Ecdysozoa</taxon>
        <taxon>Arthropoda</taxon>
        <taxon>Chelicerata</taxon>
        <taxon>Arachnida</taxon>
        <taxon>Araneae</taxon>
        <taxon>Araneomorphae</taxon>
        <taxon>Entelegynae</taxon>
        <taxon>Lycosoidea</taxon>
        <taxon>Ctenidae</taxon>
        <taxon>Cupiennius</taxon>
    </lineage>
</organism>
<reference key="1">
    <citation type="journal article" date="2012" name="FEBS J.">
        <title>Multicomponent venom of the spider Cupiennius salei: a bioanalytical investigation applying different strategies.</title>
        <authorList>
            <person name="Trachsel C."/>
            <person name="Siegemund D."/>
            <person name="Kampfer U."/>
            <person name="Kopp L.S."/>
            <person name="Buhr C."/>
            <person name="Grossmann J."/>
            <person name="Luthi C."/>
            <person name="Cunningham M."/>
            <person name="Nentwig W."/>
            <person name="Kuhn-Nentwig L."/>
            <person name="Schurch S."/>
            <person name="Schaller J."/>
        </authorList>
    </citation>
    <scope>PROTEIN SEQUENCE</scope>
    <scope>MASS SPECTROMETRY</scope>
    <scope>AMIDATION AT GLU-20</scope>
    <source>
        <tissue>Venom</tissue>
    </source>
</reference>
<reference key="2">
    <citation type="unpublished observations" date="2015-06">
        <authorList>
            <person name="Kuhn-Nentwig L."/>
            <person name="Gohel T."/>
        </authorList>
    </citation>
    <scope>NOMENCLATURE</scope>
</reference>
<dbReference type="GO" id="GO:0005576">
    <property type="term" value="C:extracellular region"/>
    <property type="evidence" value="ECO:0007669"/>
    <property type="project" value="UniProtKB-SubCell"/>
</dbReference>
<dbReference type="GO" id="GO:0090729">
    <property type="term" value="F:toxin activity"/>
    <property type="evidence" value="ECO:0007669"/>
    <property type="project" value="UniProtKB-KW"/>
</dbReference>
<dbReference type="GO" id="GO:0042742">
    <property type="term" value="P:defense response to bacterium"/>
    <property type="evidence" value="ECO:0007669"/>
    <property type="project" value="InterPro"/>
</dbReference>
<dbReference type="InterPro" id="IPR035164">
    <property type="entry name" value="Cupiennin"/>
</dbReference>
<dbReference type="Pfam" id="PF17563">
    <property type="entry name" value="Cu"/>
    <property type="match status" value="1"/>
</dbReference>